<gene>
    <name type="ordered locus">RD1_2695</name>
</gene>
<feature type="chain" id="PRO_1000013026" description="UPF0145 protein RD1_2695">
    <location>
        <begin position="1"/>
        <end position="104"/>
    </location>
</feature>
<reference key="1">
    <citation type="journal article" date="2007" name="J. Bacteriol.">
        <title>The complete genome sequence of Roseobacter denitrificans reveals a mixotrophic rather than photosynthetic metabolism.</title>
        <authorList>
            <person name="Swingley W.D."/>
            <person name="Sadekar S."/>
            <person name="Mastrian S.D."/>
            <person name="Matthies H.J."/>
            <person name="Hao J."/>
            <person name="Ramos H."/>
            <person name="Acharya C.R."/>
            <person name="Conrad A.L."/>
            <person name="Taylor H.L."/>
            <person name="Dejesa L.C."/>
            <person name="Shah M.K."/>
            <person name="O'Huallachain M.E."/>
            <person name="Lince M.T."/>
            <person name="Blankenship R.E."/>
            <person name="Beatty J.T."/>
            <person name="Touchman J.W."/>
        </authorList>
    </citation>
    <scope>NUCLEOTIDE SEQUENCE [LARGE SCALE GENOMIC DNA]</scope>
    <source>
        <strain>ATCC 33942 / OCh 114</strain>
    </source>
</reference>
<protein>
    <recommendedName>
        <fullName evidence="1">UPF0145 protein RD1_2695</fullName>
    </recommendedName>
</protein>
<dbReference type="EMBL" id="CP000362">
    <property type="protein sequence ID" value="ABG32236.1"/>
    <property type="molecule type" value="Genomic_DNA"/>
</dbReference>
<dbReference type="RefSeq" id="WP_011568853.1">
    <property type="nucleotide sequence ID" value="NC_008209.1"/>
</dbReference>
<dbReference type="SMR" id="Q165V7"/>
<dbReference type="STRING" id="375451.RD1_2695"/>
<dbReference type="KEGG" id="rde:RD1_2695"/>
<dbReference type="eggNOG" id="COG0393">
    <property type="taxonomic scope" value="Bacteria"/>
</dbReference>
<dbReference type="HOGENOM" id="CLU_117144_3_2_5"/>
<dbReference type="OrthoDB" id="9796448at2"/>
<dbReference type="Proteomes" id="UP000007029">
    <property type="component" value="Chromosome"/>
</dbReference>
<dbReference type="Gene3D" id="3.30.110.70">
    <property type="entry name" value="Hypothetical protein apc22750. Chain B"/>
    <property type="match status" value="1"/>
</dbReference>
<dbReference type="HAMAP" id="MF_00338">
    <property type="entry name" value="UPF0145"/>
    <property type="match status" value="1"/>
</dbReference>
<dbReference type="InterPro" id="IPR035439">
    <property type="entry name" value="UPF0145_dom_sf"/>
</dbReference>
<dbReference type="InterPro" id="IPR002765">
    <property type="entry name" value="UPF0145_YbjQ-like"/>
</dbReference>
<dbReference type="PANTHER" id="PTHR34068">
    <property type="entry name" value="UPF0145 PROTEIN YBJQ"/>
    <property type="match status" value="1"/>
</dbReference>
<dbReference type="PANTHER" id="PTHR34068:SF1">
    <property type="entry name" value="UPF0145 PROTEIN YBJQ"/>
    <property type="match status" value="1"/>
</dbReference>
<dbReference type="Pfam" id="PF01906">
    <property type="entry name" value="YbjQ_1"/>
    <property type="match status" value="1"/>
</dbReference>
<dbReference type="SUPFAM" id="SSF117782">
    <property type="entry name" value="YbjQ-like"/>
    <property type="match status" value="1"/>
</dbReference>
<comment type="similarity">
    <text evidence="1">Belongs to the UPF0145 family.</text>
</comment>
<keyword id="KW-1185">Reference proteome</keyword>
<accession>Q165V7</accession>
<sequence>MILTTTNTIEGHTITAYKGIVVGEAIMGANIVRDFFASVTDVIGGRSGAYEDKLQDARTEAMAEIEERAAALGANAVVGIDLDYEVTGDSMLMVSVSGTAVTIT</sequence>
<proteinExistence type="inferred from homology"/>
<evidence type="ECO:0000255" key="1">
    <source>
        <dbReference type="HAMAP-Rule" id="MF_00338"/>
    </source>
</evidence>
<organism>
    <name type="scientific">Roseobacter denitrificans (strain ATCC 33942 / OCh 114)</name>
    <name type="common">Erythrobacter sp. (strain OCh 114)</name>
    <name type="synonym">Roseobacter denitrificans</name>
    <dbReference type="NCBI Taxonomy" id="375451"/>
    <lineage>
        <taxon>Bacteria</taxon>
        <taxon>Pseudomonadati</taxon>
        <taxon>Pseudomonadota</taxon>
        <taxon>Alphaproteobacteria</taxon>
        <taxon>Rhodobacterales</taxon>
        <taxon>Roseobacteraceae</taxon>
        <taxon>Roseobacter</taxon>
    </lineage>
</organism>
<name>Y2695_ROSDO</name>